<comment type="function">
    <text evidence="1">Catalyzes a salvage reaction resulting in the formation of AMP, that is energically less costly than de novo synthesis.</text>
</comment>
<comment type="catalytic activity">
    <reaction evidence="1">
        <text>AMP + diphosphate = 5-phospho-alpha-D-ribose 1-diphosphate + adenine</text>
        <dbReference type="Rhea" id="RHEA:16609"/>
        <dbReference type="ChEBI" id="CHEBI:16708"/>
        <dbReference type="ChEBI" id="CHEBI:33019"/>
        <dbReference type="ChEBI" id="CHEBI:58017"/>
        <dbReference type="ChEBI" id="CHEBI:456215"/>
        <dbReference type="EC" id="2.4.2.7"/>
    </reaction>
</comment>
<comment type="pathway">
    <text evidence="1">Purine metabolism; AMP biosynthesis via salvage pathway; AMP from adenine: step 1/1.</text>
</comment>
<comment type="subunit">
    <text evidence="1">Homodimer.</text>
</comment>
<comment type="subcellular location">
    <subcellularLocation>
        <location evidence="1">Cytoplasm</location>
    </subcellularLocation>
</comment>
<comment type="similarity">
    <text evidence="1">Belongs to the purine/pyrimidine phosphoribosyltransferase family.</text>
</comment>
<sequence>MDFKQHIAIVPDYPKEGIVFKDITPLMNDGKAYKAATDAIVEYAKERDIDLVVGPEARGFIIGCPVSYALEVGFAPVRKLGKLPREVITVDYGKEYGKDVLTIHKDAIKPGQRVLITDDLLATGGTIEATIKLVEELGGVVAGIAFLVELTYLDGRKMLDGYDVLVLEKY</sequence>
<gene>
    <name evidence="1" type="primary">apt</name>
    <name type="ordered locus">BT9727_4141</name>
</gene>
<evidence type="ECO:0000255" key="1">
    <source>
        <dbReference type="HAMAP-Rule" id="MF_00004"/>
    </source>
</evidence>
<accession>Q6HDB8</accession>
<organism>
    <name type="scientific">Bacillus thuringiensis subsp. konkukian (strain 97-27)</name>
    <dbReference type="NCBI Taxonomy" id="281309"/>
    <lineage>
        <taxon>Bacteria</taxon>
        <taxon>Bacillati</taxon>
        <taxon>Bacillota</taxon>
        <taxon>Bacilli</taxon>
        <taxon>Bacillales</taxon>
        <taxon>Bacillaceae</taxon>
        <taxon>Bacillus</taxon>
        <taxon>Bacillus cereus group</taxon>
    </lineage>
</organism>
<feature type="chain" id="PRO_0000149351" description="Adenine phosphoribosyltransferase">
    <location>
        <begin position="1"/>
        <end position="170"/>
    </location>
</feature>
<keyword id="KW-0963">Cytoplasm</keyword>
<keyword id="KW-0328">Glycosyltransferase</keyword>
<keyword id="KW-0660">Purine salvage</keyword>
<keyword id="KW-0808">Transferase</keyword>
<dbReference type="EC" id="2.4.2.7" evidence="1"/>
<dbReference type="EMBL" id="AE017355">
    <property type="protein sequence ID" value="AAT60830.1"/>
    <property type="molecule type" value="Genomic_DNA"/>
</dbReference>
<dbReference type="RefSeq" id="WP_000346214.1">
    <property type="nucleotide sequence ID" value="NC_005957.1"/>
</dbReference>
<dbReference type="RefSeq" id="YP_038458.1">
    <property type="nucleotide sequence ID" value="NC_005957.1"/>
</dbReference>
<dbReference type="SMR" id="Q6HDB8"/>
<dbReference type="KEGG" id="btk:BT9727_4141"/>
<dbReference type="PATRIC" id="fig|281309.8.peg.4419"/>
<dbReference type="HOGENOM" id="CLU_063339_3_0_9"/>
<dbReference type="UniPathway" id="UPA00588">
    <property type="reaction ID" value="UER00646"/>
</dbReference>
<dbReference type="Proteomes" id="UP000001301">
    <property type="component" value="Chromosome"/>
</dbReference>
<dbReference type="GO" id="GO:0005737">
    <property type="term" value="C:cytoplasm"/>
    <property type="evidence" value="ECO:0007669"/>
    <property type="project" value="UniProtKB-SubCell"/>
</dbReference>
<dbReference type="GO" id="GO:0002055">
    <property type="term" value="F:adenine binding"/>
    <property type="evidence" value="ECO:0007669"/>
    <property type="project" value="TreeGrafter"/>
</dbReference>
<dbReference type="GO" id="GO:0003999">
    <property type="term" value="F:adenine phosphoribosyltransferase activity"/>
    <property type="evidence" value="ECO:0007669"/>
    <property type="project" value="UniProtKB-UniRule"/>
</dbReference>
<dbReference type="GO" id="GO:0016208">
    <property type="term" value="F:AMP binding"/>
    <property type="evidence" value="ECO:0007669"/>
    <property type="project" value="TreeGrafter"/>
</dbReference>
<dbReference type="GO" id="GO:0006168">
    <property type="term" value="P:adenine salvage"/>
    <property type="evidence" value="ECO:0007669"/>
    <property type="project" value="InterPro"/>
</dbReference>
<dbReference type="GO" id="GO:0044209">
    <property type="term" value="P:AMP salvage"/>
    <property type="evidence" value="ECO:0007669"/>
    <property type="project" value="UniProtKB-UniRule"/>
</dbReference>
<dbReference type="GO" id="GO:0006166">
    <property type="term" value="P:purine ribonucleoside salvage"/>
    <property type="evidence" value="ECO:0007669"/>
    <property type="project" value="UniProtKB-KW"/>
</dbReference>
<dbReference type="CDD" id="cd06223">
    <property type="entry name" value="PRTases_typeI"/>
    <property type="match status" value="1"/>
</dbReference>
<dbReference type="FunFam" id="3.40.50.2020:FF:000004">
    <property type="entry name" value="Adenine phosphoribosyltransferase"/>
    <property type="match status" value="1"/>
</dbReference>
<dbReference type="Gene3D" id="3.40.50.2020">
    <property type="match status" value="1"/>
</dbReference>
<dbReference type="HAMAP" id="MF_00004">
    <property type="entry name" value="Aden_phosphoribosyltr"/>
    <property type="match status" value="1"/>
</dbReference>
<dbReference type="InterPro" id="IPR005764">
    <property type="entry name" value="Ade_phspho_trans"/>
</dbReference>
<dbReference type="InterPro" id="IPR000836">
    <property type="entry name" value="PRibTrfase_dom"/>
</dbReference>
<dbReference type="InterPro" id="IPR029057">
    <property type="entry name" value="PRTase-like"/>
</dbReference>
<dbReference type="InterPro" id="IPR050054">
    <property type="entry name" value="UPRTase/APRTase"/>
</dbReference>
<dbReference type="NCBIfam" id="TIGR01090">
    <property type="entry name" value="apt"/>
    <property type="match status" value="1"/>
</dbReference>
<dbReference type="NCBIfam" id="NF002633">
    <property type="entry name" value="PRK02304.1-2"/>
    <property type="match status" value="1"/>
</dbReference>
<dbReference type="NCBIfam" id="NF002634">
    <property type="entry name" value="PRK02304.1-3"/>
    <property type="match status" value="1"/>
</dbReference>
<dbReference type="NCBIfam" id="NF002636">
    <property type="entry name" value="PRK02304.1-5"/>
    <property type="match status" value="1"/>
</dbReference>
<dbReference type="PANTHER" id="PTHR32315">
    <property type="entry name" value="ADENINE PHOSPHORIBOSYLTRANSFERASE"/>
    <property type="match status" value="1"/>
</dbReference>
<dbReference type="PANTHER" id="PTHR32315:SF3">
    <property type="entry name" value="ADENINE PHOSPHORIBOSYLTRANSFERASE"/>
    <property type="match status" value="1"/>
</dbReference>
<dbReference type="Pfam" id="PF00156">
    <property type="entry name" value="Pribosyltran"/>
    <property type="match status" value="1"/>
</dbReference>
<dbReference type="SUPFAM" id="SSF53271">
    <property type="entry name" value="PRTase-like"/>
    <property type="match status" value="1"/>
</dbReference>
<proteinExistence type="inferred from homology"/>
<name>APT_BACHK</name>
<protein>
    <recommendedName>
        <fullName evidence="1">Adenine phosphoribosyltransferase</fullName>
        <shortName evidence="1">APRT</shortName>
        <ecNumber evidence="1">2.4.2.7</ecNumber>
    </recommendedName>
</protein>
<reference key="1">
    <citation type="journal article" date="2006" name="J. Bacteriol.">
        <title>Pathogenomic sequence analysis of Bacillus cereus and Bacillus thuringiensis isolates closely related to Bacillus anthracis.</title>
        <authorList>
            <person name="Han C.S."/>
            <person name="Xie G."/>
            <person name="Challacombe J.F."/>
            <person name="Altherr M.R."/>
            <person name="Bhotika S.S."/>
            <person name="Bruce D."/>
            <person name="Campbell C.S."/>
            <person name="Campbell M.L."/>
            <person name="Chen J."/>
            <person name="Chertkov O."/>
            <person name="Cleland C."/>
            <person name="Dimitrijevic M."/>
            <person name="Doggett N.A."/>
            <person name="Fawcett J.J."/>
            <person name="Glavina T."/>
            <person name="Goodwin L.A."/>
            <person name="Hill K.K."/>
            <person name="Hitchcock P."/>
            <person name="Jackson P.J."/>
            <person name="Keim P."/>
            <person name="Kewalramani A.R."/>
            <person name="Longmire J."/>
            <person name="Lucas S."/>
            <person name="Malfatti S."/>
            <person name="McMurry K."/>
            <person name="Meincke L.J."/>
            <person name="Misra M."/>
            <person name="Moseman B.L."/>
            <person name="Mundt M."/>
            <person name="Munk A.C."/>
            <person name="Okinaka R.T."/>
            <person name="Parson-Quintana B."/>
            <person name="Reilly L.P."/>
            <person name="Richardson P."/>
            <person name="Robinson D.L."/>
            <person name="Rubin E."/>
            <person name="Saunders E."/>
            <person name="Tapia R."/>
            <person name="Tesmer J.G."/>
            <person name="Thayer N."/>
            <person name="Thompson L.S."/>
            <person name="Tice H."/>
            <person name="Ticknor L.O."/>
            <person name="Wills P.L."/>
            <person name="Brettin T.S."/>
            <person name="Gilna P."/>
        </authorList>
    </citation>
    <scope>NUCLEOTIDE SEQUENCE [LARGE SCALE GENOMIC DNA]</scope>
    <source>
        <strain>97-27</strain>
    </source>
</reference>